<organism>
    <name type="scientific">Cannabis sativa</name>
    <name type="common">Hemp</name>
    <name type="synonym">Marijuana</name>
    <dbReference type="NCBI Taxonomy" id="3483"/>
    <lineage>
        <taxon>Eukaryota</taxon>
        <taxon>Viridiplantae</taxon>
        <taxon>Streptophyta</taxon>
        <taxon>Embryophyta</taxon>
        <taxon>Tracheophyta</taxon>
        <taxon>Spermatophyta</taxon>
        <taxon>Magnoliopsida</taxon>
        <taxon>eudicotyledons</taxon>
        <taxon>Gunneridae</taxon>
        <taxon>Pentapetalae</taxon>
        <taxon>rosids</taxon>
        <taxon>fabids</taxon>
        <taxon>Rosales</taxon>
        <taxon>Cannabaceae</taxon>
        <taxon>Cannabis</taxon>
    </lineage>
</organism>
<sequence>MQCIAFHQFASSSSLPIWSSIDNRFTPKTSITSISKPKPKLKSKSNLKSRSRSSTCYPIQCTVVDNPSSTITNNSDRRSANYGPPIWSFDFVQSLPIQYKGESYTSRLNKLEKDVKRMLIGVENSLAQLELIDTIQRLGISYRFENEIISILKEKFTNNNNNPNPINYDLYATALQFRLLRQYGFEVPQEIFNNFKNHKTGEFKANISNDIMGALGLYEASFHGKKGESILEEARIFTTKCLKKYKLMSSSNNNNMTLISLLVNHALEMPLQWRITRSEAKWFIEEIYERKQDMNPTLLEFAKLDFNMLQSTYQEELKVLSRWWKDSKLGEKLPFVRDRLVECFLWQVGVRFEPQFSYFRIMDTKLYVLLTIIDDMHDIYGTLEELQLFTNALQRWDLKELDKLPDYMKTAFYFTYNFTNELAFDVLQEHGFVHIEYFKKLMVELCKHHLQEAKWFYSGYKPTLQEYVENGWLSVGGQVILMHAYFAFTNPVTKEALECLKDGHPNIVRHASIILRLADDLGTLSDELKRGDVPKSIQCYMHDTGASEDEAREHIKYLISESWKEMNNEDGNINSFFSNEFVQVKQNLGRASQMIYQYGDGHASQNNLSKERVLGLIITPIPM</sequence>
<proteinExistence type="evidence at protein level"/>
<gene>
    <name evidence="9" type="primary">TPS1</name>
    <name evidence="8" type="synonym">TPS14CT</name>
</gene>
<evidence type="ECO:0000250" key="1">
    <source>
        <dbReference type="UniProtKB" id="A0A1C9J6A7"/>
    </source>
</evidence>
<evidence type="ECO:0000250" key="2">
    <source>
        <dbReference type="UniProtKB" id="Q40577"/>
    </source>
</evidence>
<evidence type="ECO:0000250" key="3">
    <source>
        <dbReference type="UniProtKB" id="Q84LB2"/>
    </source>
</evidence>
<evidence type="ECO:0000255" key="4"/>
<evidence type="ECO:0000256" key="5">
    <source>
        <dbReference type="SAM" id="MobiDB-lite"/>
    </source>
</evidence>
<evidence type="ECO:0000269" key="6">
    <source>
    </source>
</evidence>
<evidence type="ECO:0000269" key="7">
    <source ref="1"/>
</evidence>
<evidence type="ECO:0000303" key="8">
    <source>
    </source>
</evidence>
<evidence type="ECO:0000303" key="9">
    <source ref="1"/>
</evidence>
<evidence type="ECO:0000305" key="10"/>
<comment type="function">
    <text evidence="6 7">Involved in monoterpene (C10) olefins biosynthesis, constituants of cannabinoids and terpenoids-rich resins (PubMed:31138625, Ref.1). Catalyzes mainly the conversion of (2E)-geranyl diphosphate to (-)-limonene, and also produces minor products such as (+)-limonene, (+)-alpha-pinene, terpinolene, (+)-beta-pinene and beta-myrcene (PubMed:31138625, Ref.1).</text>
</comment>
<comment type="catalytic activity">
    <reaction evidence="6 7">
        <text>(2E)-geranyl diphosphate = (4S)-limonene + diphosphate</text>
        <dbReference type="Rhea" id="RHEA:12869"/>
        <dbReference type="ChEBI" id="CHEBI:15383"/>
        <dbReference type="ChEBI" id="CHEBI:33019"/>
        <dbReference type="ChEBI" id="CHEBI:58057"/>
        <dbReference type="EC" id="4.2.3.16"/>
    </reaction>
    <physiologicalReaction direction="left-to-right" evidence="6 7">
        <dbReference type="Rhea" id="RHEA:12870"/>
    </physiologicalReaction>
</comment>
<comment type="catalytic activity">
    <reaction evidence="6 7">
        <text>(2E)-geranyl diphosphate = terpinolene + diphosphate</text>
        <dbReference type="Rhea" id="RHEA:25500"/>
        <dbReference type="ChEBI" id="CHEBI:9457"/>
        <dbReference type="ChEBI" id="CHEBI:33019"/>
        <dbReference type="ChEBI" id="CHEBI:58057"/>
        <dbReference type="EC" id="4.2.3.113"/>
    </reaction>
    <physiologicalReaction direction="left-to-right" evidence="6 7">
        <dbReference type="Rhea" id="RHEA:25501"/>
    </physiologicalReaction>
</comment>
<comment type="catalytic activity">
    <reaction evidence="6 7">
        <text>(2E)-geranyl diphosphate = (1R,5R)-alpha-pinene + diphosphate</text>
        <dbReference type="Rhea" id="RHEA:32575"/>
        <dbReference type="ChEBI" id="CHEBI:28261"/>
        <dbReference type="ChEBI" id="CHEBI:33019"/>
        <dbReference type="ChEBI" id="CHEBI:58057"/>
        <dbReference type="EC" id="4.2.3.121"/>
    </reaction>
    <physiologicalReaction direction="left-to-right" evidence="6 7">
        <dbReference type="Rhea" id="RHEA:32576"/>
    </physiologicalReaction>
</comment>
<comment type="catalytic activity">
    <reaction evidence="6 7">
        <text>(2E)-geranyl diphosphate = (1R,5R)-beta-pinene + diphosphate</text>
        <dbReference type="Rhea" id="RHEA:32579"/>
        <dbReference type="ChEBI" id="CHEBI:33019"/>
        <dbReference type="ChEBI" id="CHEBI:50026"/>
        <dbReference type="ChEBI" id="CHEBI:58057"/>
        <dbReference type="EC" id="4.2.3.122"/>
    </reaction>
    <physiologicalReaction direction="left-to-right" evidence="6 7">
        <dbReference type="Rhea" id="RHEA:32580"/>
    </physiologicalReaction>
</comment>
<comment type="catalytic activity">
    <reaction evidence="6 7">
        <text>(2E)-geranyl diphosphate = beta-myrcene + diphosphate</text>
        <dbReference type="Rhea" id="RHEA:16965"/>
        <dbReference type="ChEBI" id="CHEBI:17221"/>
        <dbReference type="ChEBI" id="CHEBI:33019"/>
        <dbReference type="ChEBI" id="CHEBI:58057"/>
        <dbReference type="EC" id="4.2.3.15"/>
    </reaction>
    <physiologicalReaction direction="left-to-right" evidence="6 7">
        <dbReference type="Rhea" id="RHEA:16966"/>
    </physiologicalReaction>
</comment>
<comment type="catalytic activity">
    <reaction evidence="6">
        <text>(2E)-geranyl diphosphate = (4R)-limonene + diphosphate</text>
        <dbReference type="Rhea" id="RHEA:10940"/>
        <dbReference type="ChEBI" id="CHEBI:15382"/>
        <dbReference type="ChEBI" id="CHEBI:33019"/>
        <dbReference type="ChEBI" id="CHEBI:58057"/>
        <dbReference type="EC" id="4.2.3.20"/>
    </reaction>
    <physiologicalReaction direction="left-to-right" evidence="6">
        <dbReference type="Rhea" id="RHEA:10941"/>
    </physiologicalReaction>
</comment>
<comment type="cofactor">
    <cofactor evidence="1">
        <name>Mg(2+)</name>
        <dbReference type="ChEBI" id="CHEBI:18420"/>
    </cofactor>
    <cofactor evidence="1">
        <name>Mn(2+)</name>
        <dbReference type="ChEBI" id="CHEBI:29035"/>
    </cofactor>
    <text evidence="1">Binds 3 Mg(2+) or Mn(2+) ions per subunit.</text>
</comment>
<comment type="cofactor">
    <cofactor evidence="3">
        <name>K(+)</name>
        <dbReference type="ChEBI" id="CHEBI:29103"/>
    </cofactor>
</comment>
<comment type="biophysicochemical properties">
    <kinetics>
        <KM evidence="7">6.8 uM for Geranyl pyrophosphate</KM>
    </kinetics>
    <phDependence>
        <text evidence="7">Optimum pH is 6.5.</text>
    </phDependence>
    <temperatureDependence>
        <text evidence="7">Optimum temperature is 40 degrees Celsius.</text>
    </temperatureDependence>
</comment>
<comment type="pathway">
    <text evidence="6 7">Secondary metabolite biosynthesis; terpenoid biosynthesis.</text>
</comment>
<comment type="pathway">
    <text evidence="6 7">Terpene metabolism; (4S)-limonene biosynthesis; (4S)-limonene from geranyl diphosphate: step 1/1.</text>
</comment>
<comment type="subcellular location">
    <subcellularLocation>
        <location evidence="4">Plastid</location>
        <location evidence="4">Chloroplast</location>
    </subcellularLocation>
</comment>
<comment type="tissue specificity">
    <text evidence="7">Trichome.</text>
</comment>
<comment type="domain">
    <text evidence="2">The Asp-Asp-Xaa-Xaa-Asp/Glu (DDXXD/E) motif is important for the catalytic activity, presumably through binding to Mg(2+).</text>
</comment>
<comment type="similarity">
    <text evidence="10">Belongs to the terpene synthase family. Tpsb subfamily.</text>
</comment>
<keyword id="KW-0150">Chloroplast</keyword>
<keyword id="KW-0456">Lyase</keyword>
<keyword id="KW-0460">Magnesium</keyword>
<keyword id="KW-0479">Metal-binding</keyword>
<keyword id="KW-0934">Plastid</keyword>
<keyword id="KW-0809">Transit peptide</keyword>
<name>TPS1_CANSA</name>
<accession>A7IZZ1</accession>
<accession>A0A4Y5QVX4</accession>
<accession>A0A7J6GDG9</accession>
<accession>A0A803R1P5</accession>
<dbReference type="EC" id="4.2.3.16" evidence="7"/>
<dbReference type="EC" id="4.2.3.121" evidence="7"/>
<dbReference type="EC" id="4.2.3.122" evidence="7"/>
<dbReference type="EC" id="4.2.3.20" evidence="6"/>
<dbReference type="EC" id="4.2.3.15" evidence="7"/>
<dbReference type="EC" id="4.2.3.113" evidence="7"/>
<dbReference type="EMBL" id="DQ839404">
    <property type="protein sequence ID" value="ABI21837.1"/>
    <property type="molecule type" value="mRNA"/>
</dbReference>
<dbReference type="EMBL" id="MK801766">
    <property type="protein sequence ID" value="QCY41294.1"/>
    <property type="molecule type" value="mRNA"/>
</dbReference>
<dbReference type="EMBL" id="JAATIP010000065">
    <property type="protein sequence ID" value="KAF4380280.1"/>
    <property type="molecule type" value="Genomic_DNA"/>
</dbReference>
<dbReference type="EMBL" id="UZAU01000409">
    <property type="status" value="NOT_ANNOTATED_CDS"/>
    <property type="molecule type" value="Genomic_DNA"/>
</dbReference>
<dbReference type="SMR" id="A7IZZ1"/>
<dbReference type="OMA" id="FWTVGQI"/>
<dbReference type="OrthoDB" id="1936865at2759"/>
<dbReference type="UniPathway" id="UPA00213"/>
<dbReference type="UniPathway" id="UPA00984">
    <property type="reaction ID" value="UER00925"/>
</dbReference>
<dbReference type="Proteomes" id="UP000525078">
    <property type="component" value="Unassembled WGS sequence"/>
</dbReference>
<dbReference type="Proteomes" id="UP000596661">
    <property type="component" value="Chromosome 5"/>
</dbReference>
<dbReference type="GO" id="GO:0009507">
    <property type="term" value="C:chloroplast"/>
    <property type="evidence" value="ECO:0007669"/>
    <property type="project" value="UniProtKB-SubCell"/>
</dbReference>
<dbReference type="GO" id="GO:0050552">
    <property type="term" value="F:(4S)-limonene synthase activity"/>
    <property type="evidence" value="ECO:0007669"/>
    <property type="project" value="UniProtKB-EC"/>
</dbReference>
<dbReference type="GO" id="GO:0034002">
    <property type="term" value="F:(R)-limonene synthase activity"/>
    <property type="evidence" value="ECO:0007669"/>
    <property type="project" value="RHEA"/>
</dbReference>
<dbReference type="GO" id="GO:0000287">
    <property type="term" value="F:magnesium ion binding"/>
    <property type="evidence" value="ECO:0007669"/>
    <property type="project" value="InterPro"/>
</dbReference>
<dbReference type="GO" id="GO:0050551">
    <property type="term" value="F:myrcene synthase activity"/>
    <property type="evidence" value="ECO:0007669"/>
    <property type="project" value="RHEA"/>
</dbReference>
<dbReference type="GO" id="GO:0050550">
    <property type="term" value="F:pinene synthase activity"/>
    <property type="evidence" value="ECO:0007669"/>
    <property type="project" value="RHEA"/>
</dbReference>
<dbReference type="GO" id="GO:0016102">
    <property type="term" value="P:diterpenoid biosynthetic process"/>
    <property type="evidence" value="ECO:0007669"/>
    <property type="project" value="InterPro"/>
</dbReference>
<dbReference type="CDD" id="cd00684">
    <property type="entry name" value="Terpene_cyclase_plant_C1"/>
    <property type="match status" value="1"/>
</dbReference>
<dbReference type="FunFam" id="1.10.600.10:FF:000007">
    <property type="entry name" value="Isoprene synthase, chloroplastic"/>
    <property type="match status" value="1"/>
</dbReference>
<dbReference type="FunFam" id="1.50.10.130:FF:000001">
    <property type="entry name" value="Isoprene synthase, chloroplastic"/>
    <property type="match status" value="1"/>
</dbReference>
<dbReference type="Gene3D" id="1.10.600.10">
    <property type="entry name" value="Farnesyl Diphosphate Synthase"/>
    <property type="match status" value="1"/>
</dbReference>
<dbReference type="Gene3D" id="1.50.10.130">
    <property type="entry name" value="Terpene synthase, N-terminal domain"/>
    <property type="match status" value="1"/>
</dbReference>
<dbReference type="InterPro" id="IPR008949">
    <property type="entry name" value="Isoprenoid_synthase_dom_sf"/>
</dbReference>
<dbReference type="InterPro" id="IPR034741">
    <property type="entry name" value="Terpene_cyclase-like_1_C"/>
</dbReference>
<dbReference type="InterPro" id="IPR044814">
    <property type="entry name" value="Terpene_cyclase_plant_C1"/>
</dbReference>
<dbReference type="InterPro" id="IPR001906">
    <property type="entry name" value="Terpene_synth_N"/>
</dbReference>
<dbReference type="InterPro" id="IPR036965">
    <property type="entry name" value="Terpene_synth_N_sf"/>
</dbReference>
<dbReference type="InterPro" id="IPR050148">
    <property type="entry name" value="Terpene_synthase-like"/>
</dbReference>
<dbReference type="InterPro" id="IPR005630">
    <property type="entry name" value="Terpene_synthase_metal-bd"/>
</dbReference>
<dbReference type="InterPro" id="IPR008930">
    <property type="entry name" value="Terpenoid_cyclase/PrenylTrfase"/>
</dbReference>
<dbReference type="PANTHER" id="PTHR31225">
    <property type="entry name" value="OS04G0344100 PROTEIN-RELATED"/>
    <property type="match status" value="1"/>
</dbReference>
<dbReference type="PANTHER" id="PTHR31225:SF9">
    <property type="entry name" value="TERPENE SYNTHASE 10"/>
    <property type="match status" value="1"/>
</dbReference>
<dbReference type="Pfam" id="PF01397">
    <property type="entry name" value="Terpene_synth"/>
    <property type="match status" value="1"/>
</dbReference>
<dbReference type="Pfam" id="PF03936">
    <property type="entry name" value="Terpene_synth_C"/>
    <property type="match status" value="1"/>
</dbReference>
<dbReference type="SFLD" id="SFLDS00005">
    <property type="entry name" value="Isoprenoid_Synthase_Type_I"/>
    <property type="match status" value="1"/>
</dbReference>
<dbReference type="SFLD" id="SFLDG01019">
    <property type="entry name" value="Terpene_Cyclase_Like_1_C_Termi"/>
    <property type="match status" value="1"/>
</dbReference>
<dbReference type="SUPFAM" id="SSF48239">
    <property type="entry name" value="Terpenoid cyclases/Protein prenyltransferases"/>
    <property type="match status" value="1"/>
</dbReference>
<dbReference type="SUPFAM" id="SSF48576">
    <property type="entry name" value="Terpenoid synthases"/>
    <property type="match status" value="1"/>
</dbReference>
<reference key="1">
    <citation type="journal article" date="2007" name="Nat. Prod. Commun.">
        <title>Functional expression and characterization of trichome-specific (-)-limonene synthase and a (+)-alpha-pinene synthase from Cannabis sativa.</title>
        <authorList>
            <person name="Guennewich N."/>
            <person name="Page J.E."/>
            <person name="Koellner T.G."/>
            <person name="Degenhardt J."/>
            <person name="Kutchan T.M."/>
        </authorList>
    </citation>
    <scope>NUCLEOTIDE SEQUENCE [MRNA]</scope>
    <scope>FUNCTION</scope>
    <scope>CATALYTIC ACTIVITY</scope>
    <scope>TISSUE SPECIFICITY</scope>
    <scope>BIOPHYSICOCHEMICAL PROPERTIES</scope>
    <scope>PATHWAY</scope>
    <source>
        <strain>cv. Skunk</strain>
        <tissue>Trichome gland</tissue>
    </source>
</reference>
<reference key="2">
    <citation type="journal article" date="2019" name="Plant Physiol.">
        <title>Gene networks underlying cannabinoid and terpenoid accumulation in cannabis.</title>
        <authorList>
            <person name="Zager J.J."/>
            <person name="Lange I."/>
            <person name="Srividya N."/>
            <person name="Smith A."/>
            <person name="Lange B.M."/>
        </authorList>
    </citation>
    <scope>NUCLEOTIDE SEQUENCE [MRNA]</scope>
    <scope>FUNCTION</scope>
    <scope>CATALYTIC ACTIVITY</scope>
    <scope>PATHWAY</scope>
    <source>
        <strain>cv. Black Lime</strain>
        <strain>cv. Blackberry Kush</strain>
        <strain>cv. Canna Tsu</strain>
        <strain>cv. Cherry Chem</strain>
        <strain>cv. Mama Thai</strain>
        <strain>cv. Sour Diesel</strain>
        <strain>cv. Terple</strain>
        <strain>cv. Valley Fire</strain>
        <strain>cv. White Cookies</strain>
        <tissue>Trichome gland</tissue>
    </source>
</reference>
<reference key="3">
    <citation type="submission" date="2020-03" db="EMBL/GenBank/DDBJ databases">
        <title>Sequence and annotation of 42 cannabis genomes reveals extensive copy number variation in cannabinoid synthesis and pathogen resistance genes.</title>
        <authorList>
            <person name="Mckernan K.J."/>
            <person name="Helbert Y."/>
            <person name="Kane L.T."/>
            <person name="Ebling H."/>
            <person name="Zhang L."/>
            <person name="Liu B."/>
            <person name="Eaton Z."/>
            <person name="Mclaughlin S."/>
            <person name="Kingan S."/>
            <person name="Baybayan P."/>
            <person name="Concepcion G."/>
            <person name="Jordan M."/>
            <person name="Riva A."/>
            <person name="Barbazuk W."/>
            <person name="Harkins T."/>
        </authorList>
    </citation>
    <scope>NUCLEOTIDE SEQUENCE [LARGE SCALE GENOMIC DNA]</scope>
    <source>
        <strain>cv. Jamaican Lion 4</strain>
        <tissue>Leaf</tissue>
    </source>
</reference>
<feature type="transit peptide" description="Chloroplast" evidence="4">
    <location>
        <begin position="1"/>
        <end position="60"/>
    </location>
</feature>
<feature type="chain" id="PRO_0000363060" description="(-)-limonene synthase TPS1, chloroplastic">
    <location>
        <begin position="61"/>
        <end position="623"/>
    </location>
</feature>
<feature type="region of interest" description="Disordered" evidence="5">
    <location>
        <begin position="29"/>
        <end position="52"/>
    </location>
</feature>
<feature type="short sequence motif" description="DDXXD motif" evidence="2">
    <location>
        <begin position="374"/>
        <end position="378"/>
    </location>
</feature>
<feature type="compositionally biased region" description="Basic residues" evidence="5">
    <location>
        <begin position="37"/>
        <end position="51"/>
    </location>
</feature>
<feature type="binding site" evidence="2">
    <location>
        <position position="337"/>
    </location>
    <ligand>
        <name>(2E)-geranyl diphosphate</name>
        <dbReference type="ChEBI" id="CHEBI:58057"/>
    </ligand>
</feature>
<feature type="binding site" evidence="2">
    <location>
        <position position="374"/>
    </location>
    <ligand>
        <name>(2E)-geranyl diphosphate</name>
        <dbReference type="ChEBI" id="CHEBI:58057"/>
    </ligand>
</feature>
<feature type="binding site" evidence="2">
    <location>
        <position position="374"/>
    </location>
    <ligand>
        <name>Mg(2+)</name>
        <dbReference type="ChEBI" id="CHEBI:18420"/>
        <label>1</label>
    </ligand>
</feature>
<feature type="binding site" evidence="2">
    <location>
        <position position="374"/>
    </location>
    <ligand>
        <name>Mg(2+)</name>
        <dbReference type="ChEBI" id="CHEBI:18420"/>
        <label>2</label>
    </ligand>
</feature>
<feature type="binding site" evidence="2">
    <location>
        <position position="378"/>
    </location>
    <ligand>
        <name>(2E)-geranyl diphosphate</name>
        <dbReference type="ChEBI" id="CHEBI:58057"/>
    </ligand>
</feature>
<feature type="binding site" evidence="2">
    <location>
        <position position="378"/>
    </location>
    <ligand>
        <name>Mg(2+)</name>
        <dbReference type="ChEBI" id="CHEBI:18420"/>
        <label>1</label>
    </ligand>
</feature>
<feature type="binding site" evidence="2">
    <location>
        <position position="378"/>
    </location>
    <ligand>
        <name>Mg(2+)</name>
        <dbReference type="ChEBI" id="CHEBI:18420"/>
        <label>2</label>
    </ligand>
</feature>
<feature type="binding site" evidence="2">
    <location>
        <position position="516"/>
    </location>
    <ligand>
        <name>(2E)-geranyl diphosphate</name>
        <dbReference type="ChEBI" id="CHEBI:58057"/>
    </ligand>
</feature>
<feature type="binding site" evidence="2">
    <location>
        <position position="519"/>
    </location>
    <ligand>
        <name>(2E)-geranyl diphosphate</name>
        <dbReference type="ChEBI" id="CHEBI:58057"/>
    </ligand>
</feature>
<feature type="binding site" evidence="2">
    <location>
        <position position="519"/>
    </location>
    <ligand>
        <name>Mg(2+)</name>
        <dbReference type="ChEBI" id="CHEBI:18420"/>
        <label>3</label>
    </ligand>
</feature>
<feature type="binding site" evidence="2">
    <location>
        <position position="523"/>
    </location>
    <ligand>
        <name>Mg(2+)</name>
        <dbReference type="ChEBI" id="CHEBI:18420"/>
        <label>3</label>
    </ligand>
</feature>
<feature type="binding site" evidence="2">
    <location>
        <position position="527"/>
    </location>
    <ligand>
        <name>Mg(2+)</name>
        <dbReference type="ChEBI" id="CHEBI:18420"/>
        <label>3</label>
    </ligand>
</feature>
<feature type="sequence conflict" description="In Ref. 1; ABI21837." evidence="10" ref="1">
    <original>P</original>
    <variation>S</variation>
    <location>
        <position position="58"/>
    </location>
</feature>
<feature type="sequence conflict" description="In Ref. 1; ABI21837 and 2; QCY41294." evidence="10" ref="1 2">
    <original>N</original>
    <variation>D</variation>
    <location>
        <position position="161"/>
    </location>
</feature>
<feature type="sequence conflict" description="In Ref. 2; QCY41294." evidence="10" ref="2">
    <location>
        <position position="166"/>
    </location>
</feature>
<feature type="sequence conflict" description="In Ref. 1; ABI21837." evidence="10" ref="1">
    <location>
        <position position="167"/>
    </location>
</feature>
<feature type="sequence conflict" description="In Ref. 2; QCY41294." evidence="10" ref="2">
    <original>KQ</original>
    <variation>CK</variation>
    <location>
        <begin position="585"/>
        <end position="586"/>
    </location>
</feature>
<feature type="sequence conflict" description="In Ref. 1; ABI21837." evidence="10" ref="1">
    <original>Q</original>
    <variation>K</variation>
    <location>
        <position position="586"/>
    </location>
</feature>
<feature type="sequence conflict" description="In Ref. 2; QCY41294." evidence="10" ref="2">
    <original>MI</original>
    <variation>FM</variation>
    <location>
        <begin position="594"/>
        <end position="595"/>
    </location>
</feature>
<feature type="sequence conflict" description="In Ref. 1; ABI21837." evidence="10" ref="1">
    <original>I</original>
    <variation>M</variation>
    <location>
        <position position="595"/>
    </location>
</feature>
<protein>
    <recommendedName>
        <fullName evidence="9">(-)-limonene synthase TPS1, chloroplastic</fullName>
        <shortName evidence="9">(-)-(4S)-limonene synthase</shortName>
        <ecNumber evidence="7">4.2.3.16</ecNumber>
    </recommendedName>
    <alternativeName>
        <fullName evidence="9">(+)-alpha-pinene synthase TPS1</fullName>
        <ecNumber evidence="7">4.2.3.121</ecNumber>
    </alternativeName>
    <alternativeName>
        <fullName evidence="9">(+)-beta-pinene synthase TPS1</fullName>
        <ecNumber evidence="7">4.2.3.122</ecNumber>
    </alternativeName>
    <alternativeName>
        <fullName evidence="8">(R)-limonene synthase</fullName>
        <ecNumber evidence="6">4.2.3.20</ecNumber>
    </alternativeName>
    <alternativeName>
        <fullName evidence="9">Myrcene synthase TPS1</fullName>
        <ecNumber evidence="7">4.2.3.15</ecNumber>
    </alternativeName>
    <alternativeName>
        <fullName evidence="9">Terpene synthase 1</fullName>
        <shortName evidence="9">CsTPS1</shortName>
    </alternativeName>
    <alternativeName>
        <fullName evidence="8">Terpene synthase 14 CT</fullName>
        <shortName evidence="8">CsTPS14CT</shortName>
    </alternativeName>
    <alternativeName>
        <fullName evidence="9">Terpinolene synthase TPS1</fullName>
        <ecNumber evidence="7">4.2.3.113</ecNumber>
    </alternativeName>
</protein>